<proteinExistence type="evidence at protein level"/>
<dbReference type="EMBL" id="AF008220">
    <property type="protein sequence ID" value="AAC00237.1"/>
    <property type="molecule type" value="Genomic_DNA"/>
</dbReference>
<dbReference type="EMBL" id="AL009126">
    <property type="protein sequence ID" value="CAB15043.1"/>
    <property type="molecule type" value="Genomic_DNA"/>
</dbReference>
<dbReference type="PIR" id="H69618">
    <property type="entry name" value="H69618"/>
</dbReference>
<dbReference type="RefSeq" id="NP_390943.1">
    <property type="nucleotide sequence ID" value="NC_000964.3"/>
</dbReference>
<dbReference type="RefSeq" id="WP_003229083.1">
    <property type="nucleotide sequence ID" value="NZ_OZ025638.1"/>
</dbReference>
<dbReference type="SMR" id="P80879"/>
<dbReference type="FunCoup" id="P80879">
    <property type="interactions" value="186"/>
</dbReference>
<dbReference type="STRING" id="224308.BSU30650"/>
<dbReference type="jPOST" id="P80879"/>
<dbReference type="PaxDb" id="224308-BSU30650"/>
<dbReference type="EnsemblBacteria" id="CAB15043">
    <property type="protein sequence ID" value="CAB15043"/>
    <property type="gene ID" value="BSU_30650"/>
</dbReference>
<dbReference type="GeneID" id="937211"/>
<dbReference type="KEGG" id="bsu:BSU30650"/>
<dbReference type="PATRIC" id="fig|224308.179.peg.3322"/>
<dbReference type="eggNOG" id="COG0783">
    <property type="taxonomic scope" value="Bacteria"/>
</dbReference>
<dbReference type="InParanoid" id="P80879"/>
<dbReference type="OrthoDB" id="9797023at2"/>
<dbReference type="PhylomeDB" id="P80879"/>
<dbReference type="BioCyc" id="BSUB:BSU30650-MONOMER"/>
<dbReference type="Proteomes" id="UP000001570">
    <property type="component" value="Chromosome"/>
</dbReference>
<dbReference type="GO" id="GO:0008199">
    <property type="term" value="F:ferric iron binding"/>
    <property type="evidence" value="ECO:0007669"/>
    <property type="project" value="InterPro"/>
</dbReference>
<dbReference type="GO" id="GO:0016722">
    <property type="term" value="F:oxidoreductase activity, acting on metal ions"/>
    <property type="evidence" value="ECO:0007669"/>
    <property type="project" value="InterPro"/>
</dbReference>
<dbReference type="CDD" id="cd01043">
    <property type="entry name" value="DPS"/>
    <property type="match status" value="1"/>
</dbReference>
<dbReference type="Gene3D" id="1.20.1260.10">
    <property type="match status" value="1"/>
</dbReference>
<dbReference type="InterPro" id="IPR002177">
    <property type="entry name" value="DPS_DNA-bd"/>
</dbReference>
<dbReference type="InterPro" id="IPR023188">
    <property type="entry name" value="DPS_DNA-bd_CS"/>
</dbReference>
<dbReference type="InterPro" id="IPR012347">
    <property type="entry name" value="Ferritin-like"/>
</dbReference>
<dbReference type="InterPro" id="IPR009078">
    <property type="entry name" value="Ferritin-like_SF"/>
</dbReference>
<dbReference type="InterPro" id="IPR008331">
    <property type="entry name" value="Ferritin_DPS_dom"/>
</dbReference>
<dbReference type="PANTHER" id="PTHR42932">
    <property type="entry name" value="GENERAL STRESS PROTEIN 20U"/>
    <property type="match status" value="1"/>
</dbReference>
<dbReference type="PANTHER" id="PTHR42932:SF1">
    <property type="entry name" value="GENERAL STRESS PROTEIN 20U"/>
    <property type="match status" value="1"/>
</dbReference>
<dbReference type="Pfam" id="PF00210">
    <property type="entry name" value="Ferritin"/>
    <property type="match status" value="1"/>
</dbReference>
<dbReference type="PIRSF" id="PIRSF005900">
    <property type="entry name" value="Dps"/>
    <property type="match status" value="1"/>
</dbReference>
<dbReference type="PRINTS" id="PR01346">
    <property type="entry name" value="HELNAPAPROT"/>
</dbReference>
<dbReference type="SUPFAM" id="SSF47240">
    <property type="entry name" value="Ferritin-like"/>
    <property type="match status" value="1"/>
</dbReference>
<dbReference type="PROSITE" id="PS00818">
    <property type="entry name" value="DPS_1"/>
    <property type="match status" value="1"/>
</dbReference>
<dbReference type="PROSITE" id="PS00819">
    <property type="entry name" value="DPS_2"/>
    <property type="match status" value="1"/>
</dbReference>
<organism>
    <name type="scientific">Bacillus subtilis (strain 168)</name>
    <dbReference type="NCBI Taxonomy" id="224308"/>
    <lineage>
        <taxon>Bacteria</taxon>
        <taxon>Bacillati</taxon>
        <taxon>Bacillota</taxon>
        <taxon>Bacilli</taxon>
        <taxon>Bacillales</taxon>
        <taxon>Bacillaceae</taxon>
        <taxon>Bacillus</taxon>
    </lineage>
</organism>
<keyword id="KW-0903">Direct protein sequencing</keyword>
<keyword id="KW-1185">Reference proteome</keyword>
<keyword id="KW-0346">Stress response</keyword>
<comment type="induction">
    <text>By heat shock, salt stress, oxidative stress, glucose limitation and oxygen limitation.</text>
</comment>
<comment type="similarity">
    <text evidence="2">Belongs to the Dps family.</text>
</comment>
<evidence type="ECO:0000269" key="1">
    <source>
    </source>
</evidence>
<evidence type="ECO:0000305" key="2"/>
<gene>
    <name type="primary">dps</name>
    <name type="synonym">ytkB</name>
    <name type="ordered locus">BSU30650</name>
</gene>
<reference key="1">
    <citation type="journal article" date="1997" name="Microbiology">
        <title>Sequencing and functional annotation of the Bacillus subtilis genes in the 200 kb rrnB-dnaB region.</title>
        <authorList>
            <person name="Lapidus A."/>
            <person name="Galleron N."/>
            <person name="Sorokin A."/>
            <person name="Ehrlich S.D."/>
        </authorList>
    </citation>
    <scope>NUCLEOTIDE SEQUENCE [GENOMIC DNA]</scope>
    <source>
        <strain>168</strain>
    </source>
</reference>
<reference key="2">
    <citation type="journal article" date="1997" name="Nature">
        <title>The complete genome sequence of the Gram-positive bacterium Bacillus subtilis.</title>
        <authorList>
            <person name="Kunst F."/>
            <person name="Ogasawara N."/>
            <person name="Moszer I."/>
            <person name="Albertini A.M."/>
            <person name="Alloni G."/>
            <person name="Azevedo V."/>
            <person name="Bertero M.G."/>
            <person name="Bessieres P."/>
            <person name="Bolotin A."/>
            <person name="Borchert S."/>
            <person name="Borriss R."/>
            <person name="Boursier L."/>
            <person name="Brans A."/>
            <person name="Braun M."/>
            <person name="Brignell S.C."/>
            <person name="Bron S."/>
            <person name="Brouillet S."/>
            <person name="Bruschi C.V."/>
            <person name="Caldwell B."/>
            <person name="Capuano V."/>
            <person name="Carter N.M."/>
            <person name="Choi S.-K."/>
            <person name="Codani J.-J."/>
            <person name="Connerton I.F."/>
            <person name="Cummings N.J."/>
            <person name="Daniel R.A."/>
            <person name="Denizot F."/>
            <person name="Devine K.M."/>
            <person name="Duesterhoeft A."/>
            <person name="Ehrlich S.D."/>
            <person name="Emmerson P.T."/>
            <person name="Entian K.-D."/>
            <person name="Errington J."/>
            <person name="Fabret C."/>
            <person name="Ferrari E."/>
            <person name="Foulger D."/>
            <person name="Fritz C."/>
            <person name="Fujita M."/>
            <person name="Fujita Y."/>
            <person name="Fuma S."/>
            <person name="Galizzi A."/>
            <person name="Galleron N."/>
            <person name="Ghim S.-Y."/>
            <person name="Glaser P."/>
            <person name="Goffeau A."/>
            <person name="Golightly E.J."/>
            <person name="Grandi G."/>
            <person name="Guiseppi G."/>
            <person name="Guy B.J."/>
            <person name="Haga K."/>
            <person name="Haiech J."/>
            <person name="Harwood C.R."/>
            <person name="Henaut A."/>
            <person name="Hilbert H."/>
            <person name="Holsappel S."/>
            <person name="Hosono S."/>
            <person name="Hullo M.-F."/>
            <person name="Itaya M."/>
            <person name="Jones L.-M."/>
            <person name="Joris B."/>
            <person name="Karamata D."/>
            <person name="Kasahara Y."/>
            <person name="Klaerr-Blanchard M."/>
            <person name="Klein C."/>
            <person name="Kobayashi Y."/>
            <person name="Koetter P."/>
            <person name="Koningstein G."/>
            <person name="Krogh S."/>
            <person name="Kumano M."/>
            <person name="Kurita K."/>
            <person name="Lapidus A."/>
            <person name="Lardinois S."/>
            <person name="Lauber J."/>
            <person name="Lazarevic V."/>
            <person name="Lee S.-M."/>
            <person name="Levine A."/>
            <person name="Liu H."/>
            <person name="Masuda S."/>
            <person name="Mauel C."/>
            <person name="Medigue C."/>
            <person name="Medina N."/>
            <person name="Mellado R.P."/>
            <person name="Mizuno M."/>
            <person name="Moestl D."/>
            <person name="Nakai S."/>
            <person name="Noback M."/>
            <person name="Noone D."/>
            <person name="O'Reilly M."/>
            <person name="Ogawa K."/>
            <person name="Ogiwara A."/>
            <person name="Oudega B."/>
            <person name="Park S.-H."/>
            <person name="Parro V."/>
            <person name="Pohl T.M."/>
            <person name="Portetelle D."/>
            <person name="Porwollik S."/>
            <person name="Prescott A.M."/>
            <person name="Presecan E."/>
            <person name="Pujic P."/>
            <person name="Purnelle B."/>
            <person name="Rapoport G."/>
            <person name="Rey M."/>
            <person name="Reynolds S."/>
            <person name="Rieger M."/>
            <person name="Rivolta C."/>
            <person name="Rocha E."/>
            <person name="Roche B."/>
            <person name="Rose M."/>
            <person name="Sadaie Y."/>
            <person name="Sato T."/>
            <person name="Scanlan E."/>
            <person name="Schleich S."/>
            <person name="Schroeter R."/>
            <person name="Scoffone F."/>
            <person name="Sekiguchi J."/>
            <person name="Sekowska A."/>
            <person name="Seror S.J."/>
            <person name="Serror P."/>
            <person name="Shin B.-S."/>
            <person name="Soldo B."/>
            <person name="Sorokin A."/>
            <person name="Tacconi E."/>
            <person name="Takagi T."/>
            <person name="Takahashi H."/>
            <person name="Takemaru K."/>
            <person name="Takeuchi M."/>
            <person name="Tamakoshi A."/>
            <person name="Tanaka T."/>
            <person name="Terpstra P."/>
            <person name="Tognoni A."/>
            <person name="Tosato V."/>
            <person name="Uchiyama S."/>
            <person name="Vandenbol M."/>
            <person name="Vannier F."/>
            <person name="Vassarotti A."/>
            <person name="Viari A."/>
            <person name="Wambutt R."/>
            <person name="Wedler E."/>
            <person name="Wedler H."/>
            <person name="Weitzenegger T."/>
            <person name="Winters P."/>
            <person name="Wipat A."/>
            <person name="Yamamoto H."/>
            <person name="Yamane K."/>
            <person name="Yasumoto K."/>
            <person name="Yata K."/>
            <person name="Yoshida K."/>
            <person name="Yoshikawa H.-F."/>
            <person name="Zumstein E."/>
            <person name="Yoshikawa H."/>
            <person name="Danchin A."/>
        </authorList>
    </citation>
    <scope>NUCLEOTIDE SEQUENCE [LARGE SCALE GENOMIC DNA]</scope>
    <source>
        <strain>168</strain>
    </source>
</reference>
<reference key="3">
    <citation type="journal article" date="1997" name="Electrophoresis">
        <title>First steps from a two-dimensional protein index towards a response-regulation map for Bacillus subtilis.</title>
        <authorList>
            <person name="Antelmann H."/>
            <person name="Bernhardt J."/>
            <person name="Schmid R."/>
            <person name="Mach H."/>
            <person name="Voelker U."/>
            <person name="Hecker M."/>
        </authorList>
    </citation>
    <scope>PROTEIN SEQUENCE OF 2-15</scope>
    <source>
        <strain>168 / IS58</strain>
    </source>
</reference>
<protein>
    <recommendedName>
        <fullName>General stress protein 20U</fullName>
        <shortName>GSP20U</shortName>
    </recommendedName>
    <alternativeName>
        <fullName>DPS protein homolog</fullName>
    </alternativeName>
</protein>
<accession>P80879</accession>
<name>G20U_BACSU</name>
<sequence>MSEQLIQAVNKQVANWTVMYVKLHNYHWYVKGKDFFTLHEKFEELYNETATYIDDLAERLLALNGKPIATMKESLETASVKEAAGNETAEQMVQSVYDDFTVIAEELKNGMDLADEVGDETTGDMLLAIHQNIEKHNWMLKAYLG</sequence>
<feature type="initiator methionine" description="Removed" evidence="1">
    <location>
        <position position="1"/>
    </location>
</feature>
<feature type="chain" id="PRO_0000201661" description="General stress protein 20U">
    <location>
        <begin position="2"/>
        <end position="145"/>
    </location>
</feature>